<protein>
    <recommendedName>
        <fullName>Retrovirus-related Env polyprotein from Fv-4 locus</fullName>
    </recommendedName>
</protein>
<reference key="1">
    <citation type="journal article" date="1990" name="J. Virol.">
        <title>Construction and characterization of the recombinant Moloney murine leukemia viruses bearing the mouse Fv-4 env gene.</title>
        <authorList>
            <person name="Masuda M."/>
            <person name="Yoshikura H."/>
        </authorList>
    </citation>
    <scope>NUCLEOTIDE SEQUENCE [GENOMIC DNA]</scope>
    <source>
        <strain>BALB/cJ</strain>
        <tissue>Liver</tissue>
    </source>
</reference>
<reference key="2">
    <citation type="journal article" date="1985" name="J. Virol.">
        <title>Characterization of a molecularly cloned retroviral sequence associated with Fv-4 resistance.</title>
        <authorList>
            <person name="Ikeda H."/>
            <person name="Laigret F."/>
            <person name="Martin M.A."/>
            <person name="Repaske R."/>
        </authorList>
    </citation>
    <scope>NUCLEOTIDE SEQUENCE [GENOMIC DNA] OF 1-348 AND 595-679</scope>
</reference>
<reference key="3">
    <citation type="journal article" date="2010" name="Cell">
        <title>A tissue-specific atlas of mouse protein phosphorylation and expression.</title>
        <authorList>
            <person name="Huttlin E.L."/>
            <person name="Jedrychowski M.P."/>
            <person name="Elias J.E."/>
            <person name="Goswami T."/>
            <person name="Rad R."/>
            <person name="Beausoleil S.A."/>
            <person name="Villen J."/>
            <person name="Haas W."/>
            <person name="Sowa M.E."/>
            <person name="Gygi S.P."/>
        </authorList>
    </citation>
    <scope>IDENTIFICATION BY MASS SPECTROMETRY [LARGE SCALE ANALYSIS]</scope>
    <source>
        <tissue>Spleen</tissue>
    </source>
</reference>
<accession>P11370</accession>
<accession>Q61529</accession>
<organism>
    <name type="scientific">Mus musculus</name>
    <name type="common">Mouse</name>
    <dbReference type="NCBI Taxonomy" id="10090"/>
    <lineage>
        <taxon>Eukaryota</taxon>
        <taxon>Metazoa</taxon>
        <taxon>Chordata</taxon>
        <taxon>Craniata</taxon>
        <taxon>Vertebrata</taxon>
        <taxon>Euteleostomi</taxon>
        <taxon>Mammalia</taxon>
        <taxon>Eutheria</taxon>
        <taxon>Euarchontoglires</taxon>
        <taxon>Glires</taxon>
        <taxon>Rodentia</taxon>
        <taxon>Myomorpha</taxon>
        <taxon>Muroidea</taxon>
        <taxon>Muridae</taxon>
        <taxon>Murinae</taxon>
        <taxon>Mus</taxon>
        <taxon>Mus</taxon>
    </lineage>
</organism>
<gene>
    <name type="primary">Fv4</name>
    <name type="synonym">Env</name>
</gene>
<dbReference type="EMBL" id="M33884">
    <property type="protein sequence ID" value="AAA37564.1"/>
    <property type="molecule type" value="Genomic_DNA"/>
</dbReference>
<dbReference type="EMBL" id="M11051">
    <property type="protein sequence ID" value="AAA37562.1"/>
    <property type="molecule type" value="Genomic_DNA"/>
</dbReference>
<dbReference type="EMBL" id="M11052">
    <property type="protein sequence ID" value="AAA37563.1"/>
    <property type="molecule type" value="Genomic_DNA"/>
</dbReference>
<dbReference type="PIR" id="A25483">
    <property type="entry name" value="A25483"/>
</dbReference>
<dbReference type="SMR" id="P11370"/>
<dbReference type="FunCoup" id="P11370">
    <property type="interactions" value="38"/>
</dbReference>
<dbReference type="IntAct" id="P11370">
    <property type="interactions" value="1"/>
</dbReference>
<dbReference type="GlyGen" id="P11370">
    <property type="glycosylation" value="1 site"/>
</dbReference>
<dbReference type="iPTMnet" id="P11370"/>
<dbReference type="PhosphoSitePlus" id="P11370"/>
<dbReference type="SwissPalm" id="P11370"/>
<dbReference type="jPOST" id="P11370"/>
<dbReference type="PeptideAtlas" id="P11370"/>
<dbReference type="ProteomicsDB" id="275460"/>
<dbReference type="AGR" id="MGI:95598"/>
<dbReference type="MGI" id="MGI:95598">
    <property type="gene designation" value="Fv4"/>
</dbReference>
<dbReference type="InParanoid" id="P11370"/>
<dbReference type="PRO" id="PR:P11370"/>
<dbReference type="Proteomes" id="UP000000589">
    <property type="component" value="Unplaced"/>
</dbReference>
<dbReference type="RNAct" id="P11370">
    <property type="molecule type" value="protein"/>
</dbReference>
<dbReference type="CDD" id="cd09851">
    <property type="entry name" value="HTLV-1-like_HR1-HR2"/>
    <property type="match status" value="1"/>
</dbReference>
<dbReference type="FunFam" id="1.10.287.210:FF:000005">
    <property type="entry name" value="Envelope glycoprotein"/>
    <property type="match status" value="1"/>
</dbReference>
<dbReference type="Gene3D" id="1.10.287.210">
    <property type="match status" value="1"/>
</dbReference>
<dbReference type="Gene3D" id="3.90.310.10">
    <property type="entry name" value="ENV polyprotein, receptor-binding domain"/>
    <property type="match status" value="1"/>
</dbReference>
<dbReference type="InterPro" id="IPR008981">
    <property type="entry name" value="FMuLV_rcpt-bd"/>
</dbReference>
<dbReference type="InterPro" id="IPR018154">
    <property type="entry name" value="TLV/ENV_coat_polyprotein"/>
</dbReference>
<dbReference type="PANTHER" id="PTHR10424:SF72">
    <property type="entry name" value="BC035947 PROTEIN-RELATED"/>
    <property type="match status" value="1"/>
</dbReference>
<dbReference type="PANTHER" id="PTHR10424">
    <property type="entry name" value="VIRAL ENVELOPE PROTEIN"/>
    <property type="match status" value="1"/>
</dbReference>
<dbReference type="Pfam" id="PF00429">
    <property type="entry name" value="TLV_coat"/>
    <property type="match status" value="1"/>
</dbReference>
<dbReference type="SUPFAM" id="SSF49830">
    <property type="entry name" value="ENV polyprotein, receptor-binding domain"/>
    <property type="match status" value="1"/>
</dbReference>
<dbReference type="SUPFAM" id="SSF58069">
    <property type="entry name" value="Virus ectodomain"/>
    <property type="match status" value="1"/>
</dbReference>
<keyword id="KW-1185">Reference proteome</keyword>
<sequence length="679" mass="74453">MESPAFSKPLKDKTIKKALLGVLGILLVTGGLAHKDSPHLIYNLTWEVTNGEQETVWAVTGNHPLWTWWPDLTPDLCMLALHGPTHWGLDNRPPYSSPPGPPCCSGDKGAVSGCARDCDEPLTSYSPRCNTAWNRMKLAQVTHAPKEGFYVCPGSHRPRWARSCGGPEAYYCASWGCETTGRAAWKPTSSWDYITVSNNLSSPQAPKACKNNGWCNPLVVRFTGPGKRATSWTTGHEWGLRLYISGHDPGLTFGIRLRITDLGPRVPIGPNPVLSDQRPPSRPVPARPPPPSNSTPTGDPLTPPTGDPLTPTKPPQAGTGDRLLNLVQGAYLALNMTNPTKTQECWLCLVSEPPYYEGVAVLGDYTKHETAPTNCSSRAQHKLTLSEVTGQGKCLGAVPKTHQALCNHTEPTVSGSNYLVAPEGTLWACSTGLTPCLSTTVLNLTTDYCVLVELWPKVTYHPSEYVYTQFEPGVRFRREPVSLTLALLLGGLTMGGIAARVGTGTTALVATQQFQQLQAAMHNDLKAVEESITNLERSLTSLSEVVLQNRRGLDLLFLKEGGLCAALKEECCFYADHTGLVRDSMAKLRERLNQRQKLFESGQGWFEGLFNRSPWFTTLISTIMGPLIVLLLILLFGPCILNRLVQFVKDRISVVQALILTQQYHQLKSIDPEEVESRE</sequence>
<feature type="chain" id="PRO_0000086983" description="Retrovirus-related Env polyprotein from Fv-4 locus">
    <location>
        <begin position="1"/>
        <end position="679"/>
    </location>
</feature>
<feature type="region of interest" description="Disordered" evidence="1">
    <location>
        <begin position="268"/>
        <end position="321"/>
    </location>
</feature>
<feature type="compositionally biased region" description="Pro residues" evidence="1">
    <location>
        <begin position="280"/>
        <end position="293"/>
    </location>
</feature>
<feature type="compositionally biased region" description="Pro residues" evidence="1">
    <location>
        <begin position="301"/>
        <end position="314"/>
    </location>
</feature>
<feature type="sequence conflict" description="In Ref. 2." evidence="2" ref="2">
    <original>D</original>
    <variation>T</variation>
    <location>
        <position position="299"/>
    </location>
</feature>
<feature type="sequence conflict" description="In Ref. 2." evidence="2" ref="2">
    <original>LT</original>
    <variation>SL</variation>
    <location>
        <begin position="301"/>
        <end position="302"/>
    </location>
</feature>
<feature type="sequence conflict" description="In Ref. 2." evidence="2" ref="2">
    <original>T</original>
    <variation>R</variation>
    <location>
        <position position="305"/>
    </location>
</feature>
<feature type="sequence conflict" description="In Ref. 2." evidence="2" ref="2">
    <original>D</original>
    <variation>P</variation>
    <location>
        <position position="307"/>
    </location>
</feature>
<feature type="sequence conflict" description="In Ref. 2." evidence="2" ref="2">
    <original>LTPTKPPQAGTG</original>
    <variation>HSHQTSTGGDR</variation>
    <location>
        <begin position="309"/>
        <end position="320"/>
    </location>
</feature>
<feature type="sequence conflict" description="In Ref. 2." evidence="2" ref="2">
    <original>R</original>
    <variation>K</variation>
    <location>
        <position position="595"/>
    </location>
</feature>
<name>ENV2_MOUSE</name>
<evidence type="ECO:0000256" key="1">
    <source>
        <dbReference type="SAM" id="MobiDB-lite"/>
    </source>
</evidence>
<evidence type="ECO:0000305" key="2"/>
<proteinExistence type="evidence at protein level"/>